<reference key="1">
    <citation type="journal article" date="2009" name="PLoS Genet.">
        <title>Organised genome dynamics in the Escherichia coli species results in highly diverse adaptive paths.</title>
        <authorList>
            <person name="Touchon M."/>
            <person name="Hoede C."/>
            <person name="Tenaillon O."/>
            <person name="Barbe V."/>
            <person name="Baeriswyl S."/>
            <person name="Bidet P."/>
            <person name="Bingen E."/>
            <person name="Bonacorsi S."/>
            <person name="Bouchier C."/>
            <person name="Bouvet O."/>
            <person name="Calteau A."/>
            <person name="Chiapello H."/>
            <person name="Clermont O."/>
            <person name="Cruveiller S."/>
            <person name="Danchin A."/>
            <person name="Diard M."/>
            <person name="Dossat C."/>
            <person name="Karoui M.E."/>
            <person name="Frapy E."/>
            <person name="Garry L."/>
            <person name="Ghigo J.M."/>
            <person name="Gilles A.M."/>
            <person name="Johnson J."/>
            <person name="Le Bouguenec C."/>
            <person name="Lescat M."/>
            <person name="Mangenot S."/>
            <person name="Martinez-Jehanne V."/>
            <person name="Matic I."/>
            <person name="Nassif X."/>
            <person name="Oztas S."/>
            <person name="Petit M.A."/>
            <person name="Pichon C."/>
            <person name="Rouy Z."/>
            <person name="Ruf C.S."/>
            <person name="Schneider D."/>
            <person name="Tourret J."/>
            <person name="Vacherie B."/>
            <person name="Vallenet D."/>
            <person name="Medigue C."/>
            <person name="Rocha E.P.C."/>
            <person name="Denamur E."/>
        </authorList>
    </citation>
    <scope>NUCLEOTIDE SEQUENCE [LARGE SCALE GENOMIC DNA]</scope>
    <source>
        <strain>ED1a</strain>
    </source>
</reference>
<proteinExistence type="inferred from homology"/>
<sequence>MNEQYSALRSNVSMLGKVLGETIKDALGEHILERVETIRKLSKSSRAGNDANRQELLTTLQNLSNDELLPVARAFSQFLNLANTAEQYHSISPKGEAASNPEVIARTLRKLKNQPELSEDTIKKAVESLSLELVLTAHPTEITRRTLIHKMVEVNACLKQLDNKDIADYEHNQLMRRLRQLIAQSWHTDEIRKLRPSPVDEAKWGFAVVENSLWQGVPNYLRELNEQLEENLGYKLPVEFAPVRFTSWMGGDRDGNPNVTADITRHVLLLSRWKATDLFLKDIQVLVSELSMVEATPELLALVGEEGAAEPYRYLMKNLRSRLMATQAWLEARLKGEELPKPEGLLTQNEELWEPLYACYQSLQACGMGIIANGDLLDTLRRVKCFGVPLVRIDIRQESTRHTEALGELTRYLGIGDYESWSEADKQAFLIRELNSKRPLLPRNWQPSAETREVLDTCQVIAEAPQGSIAAYVISMAKTPSDVLAVHLLLKEAGIGFAMPVAPLFETLDDLNNANDVMTQLLNIDWYRGLIQGKQMVMIGYSDSAKDAGVMAASWAQYQAQDALIKTCEKAGIELTLFHGRGGSIGRGGAPAHAALLSQPPGSLKGGLRVTEQGEMIRFKYGLPEITVSSLSLYTGAILEANLLPPPEPKESWRCIMDELSVISCDVYRGYVRENKDFVPYFRSATPEQELGKLPLGSRPAKRRPTGGVESLRAIPWIFAWTQNRLMLPAWLGAGTALQKVVEDGKQSELEAMCRDWPFFSTRLGMLEMVFAKADLWLAEYYDQRLVDKALWPLGKELRNLQEEDIKVVLAIANDSHLMADLPWIAESIQLRNIYTDPLNVLQAELLHRSRQAEKEGQEPDPRVEQALMVTIAGIAAGMRNTG</sequence>
<dbReference type="EC" id="4.1.1.31" evidence="1"/>
<dbReference type="EMBL" id="CU928162">
    <property type="protein sequence ID" value="CAR10768.2"/>
    <property type="molecule type" value="Genomic_DNA"/>
</dbReference>
<dbReference type="RefSeq" id="WP_001005564.1">
    <property type="nucleotide sequence ID" value="NC_011745.1"/>
</dbReference>
<dbReference type="SMR" id="B7MR83"/>
<dbReference type="KEGG" id="ecq:ECED1_4661"/>
<dbReference type="HOGENOM" id="CLU_006557_2_0_6"/>
<dbReference type="Proteomes" id="UP000000748">
    <property type="component" value="Chromosome"/>
</dbReference>
<dbReference type="GO" id="GO:0005829">
    <property type="term" value="C:cytosol"/>
    <property type="evidence" value="ECO:0007669"/>
    <property type="project" value="TreeGrafter"/>
</dbReference>
<dbReference type="GO" id="GO:0000287">
    <property type="term" value="F:magnesium ion binding"/>
    <property type="evidence" value="ECO:0007669"/>
    <property type="project" value="UniProtKB-UniRule"/>
</dbReference>
<dbReference type="GO" id="GO:0008964">
    <property type="term" value="F:phosphoenolpyruvate carboxylase activity"/>
    <property type="evidence" value="ECO:0007669"/>
    <property type="project" value="UniProtKB-UniRule"/>
</dbReference>
<dbReference type="GO" id="GO:0015977">
    <property type="term" value="P:carbon fixation"/>
    <property type="evidence" value="ECO:0007669"/>
    <property type="project" value="UniProtKB-UniRule"/>
</dbReference>
<dbReference type="GO" id="GO:0006107">
    <property type="term" value="P:oxaloacetate metabolic process"/>
    <property type="evidence" value="ECO:0007669"/>
    <property type="project" value="UniProtKB-UniRule"/>
</dbReference>
<dbReference type="GO" id="GO:0006099">
    <property type="term" value="P:tricarboxylic acid cycle"/>
    <property type="evidence" value="ECO:0007669"/>
    <property type="project" value="InterPro"/>
</dbReference>
<dbReference type="FunFam" id="1.20.1440.90:FF:000002">
    <property type="entry name" value="Phosphoenolpyruvate carboxylase"/>
    <property type="match status" value="1"/>
</dbReference>
<dbReference type="Gene3D" id="1.20.1440.90">
    <property type="entry name" value="Phosphoenolpyruvate/pyruvate domain"/>
    <property type="match status" value="1"/>
</dbReference>
<dbReference type="HAMAP" id="MF_00595">
    <property type="entry name" value="PEPcase_type1"/>
    <property type="match status" value="1"/>
</dbReference>
<dbReference type="InterPro" id="IPR021135">
    <property type="entry name" value="PEP_COase"/>
</dbReference>
<dbReference type="InterPro" id="IPR022805">
    <property type="entry name" value="PEP_COase_bac/pln-type"/>
</dbReference>
<dbReference type="InterPro" id="IPR018129">
    <property type="entry name" value="PEP_COase_Lys_AS"/>
</dbReference>
<dbReference type="InterPro" id="IPR033129">
    <property type="entry name" value="PEPCASE_His_AS"/>
</dbReference>
<dbReference type="InterPro" id="IPR015813">
    <property type="entry name" value="Pyrv/PenolPyrv_kinase-like_dom"/>
</dbReference>
<dbReference type="NCBIfam" id="NF000584">
    <property type="entry name" value="PRK00009.1"/>
    <property type="match status" value="1"/>
</dbReference>
<dbReference type="PANTHER" id="PTHR30523">
    <property type="entry name" value="PHOSPHOENOLPYRUVATE CARBOXYLASE"/>
    <property type="match status" value="1"/>
</dbReference>
<dbReference type="PANTHER" id="PTHR30523:SF6">
    <property type="entry name" value="PHOSPHOENOLPYRUVATE CARBOXYLASE"/>
    <property type="match status" value="1"/>
</dbReference>
<dbReference type="Pfam" id="PF00311">
    <property type="entry name" value="PEPcase"/>
    <property type="match status" value="1"/>
</dbReference>
<dbReference type="PRINTS" id="PR00150">
    <property type="entry name" value="PEPCARBXLASE"/>
</dbReference>
<dbReference type="SUPFAM" id="SSF51621">
    <property type="entry name" value="Phosphoenolpyruvate/pyruvate domain"/>
    <property type="match status" value="1"/>
</dbReference>
<dbReference type="PROSITE" id="PS00781">
    <property type="entry name" value="PEPCASE_1"/>
    <property type="match status" value="1"/>
</dbReference>
<dbReference type="PROSITE" id="PS00393">
    <property type="entry name" value="PEPCASE_2"/>
    <property type="match status" value="1"/>
</dbReference>
<keyword id="KW-0120">Carbon dioxide fixation</keyword>
<keyword id="KW-0456">Lyase</keyword>
<keyword id="KW-0460">Magnesium</keyword>
<gene>
    <name evidence="1" type="primary">ppc</name>
    <name type="ordered locus">ECED1_4661</name>
</gene>
<feature type="chain" id="PRO_1000146980" description="Phosphoenolpyruvate carboxylase">
    <location>
        <begin position="1"/>
        <end position="883"/>
    </location>
</feature>
<feature type="active site" evidence="1">
    <location>
        <position position="138"/>
    </location>
</feature>
<feature type="active site" evidence="1">
    <location>
        <position position="546"/>
    </location>
</feature>
<organism>
    <name type="scientific">Escherichia coli O81 (strain ED1a)</name>
    <dbReference type="NCBI Taxonomy" id="585397"/>
    <lineage>
        <taxon>Bacteria</taxon>
        <taxon>Pseudomonadati</taxon>
        <taxon>Pseudomonadota</taxon>
        <taxon>Gammaproteobacteria</taxon>
        <taxon>Enterobacterales</taxon>
        <taxon>Enterobacteriaceae</taxon>
        <taxon>Escherichia</taxon>
    </lineage>
</organism>
<protein>
    <recommendedName>
        <fullName evidence="1">Phosphoenolpyruvate carboxylase</fullName>
        <shortName evidence="1">PEPC</shortName>
        <shortName evidence="1">PEPCase</shortName>
        <ecNumber evidence="1">4.1.1.31</ecNumber>
    </recommendedName>
</protein>
<name>CAPP_ECO81</name>
<comment type="function">
    <text evidence="1">Forms oxaloacetate, a four-carbon dicarboxylic acid source for the tricarboxylic acid cycle.</text>
</comment>
<comment type="catalytic activity">
    <reaction evidence="1">
        <text>oxaloacetate + phosphate = phosphoenolpyruvate + hydrogencarbonate</text>
        <dbReference type="Rhea" id="RHEA:28370"/>
        <dbReference type="ChEBI" id="CHEBI:16452"/>
        <dbReference type="ChEBI" id="CHEBI:17544"/>
        <dbReference type="ChEBI" id="CHEBI:43474"/>
        <dbReference type="ChEBI" id="CHEBI:58702"/>
        <dbReference type="EC" id="4.1.1.31"/>
    </reaction>
</comment>
<comment type="cofactor">
    <cofactor evidence="1">
        <name>Mg(2+)</name>
        <dbReference type="ChEBI" id="CHEBI:18420"/>
    </cofactor>
</comment>
<comment type="similarity">
    <text evidence="1">Belongs to the PEPCase type 1 family.</text>
</comment>
<accession>B7MR83</accession>
<evidence type="ECO:0000255" key="1">
    <source>
        <dbReference type="HAMAP-Rule" id="MF_00595"/>
    </source>
</evidence>